<gene>
    <name evidence="1" type="primary">mtnN</name>
    <name type="ordered locus">ECH74115_0169</name>
</gene>
<sequence length="232" mass="24354">MKIGIIGAMEEEVTLLRDKIENRQTISLGGCEIYTGQLNGTEVALLKSGIGKVAAALGATLLLEHCKPDVIINTGSAGGLAPTLKVGDIVVSDEARYHDADVTAFGYEYGQLPGCPAGFKADDKLIAAAEACIAELNLNAVRGLIVSGDAFINGSVGLAKIRHNFPQAIAVEMEATAIAHVCHNFNVPFVVVRAISDVADQQSHLSFDEFLAVAAKQSSLMVESLVQKLAHG</sequence>
<evidence type="ECO:0000255" key="1">
    <source>
        <dbReference type="HAMAP-Rule" id="MF_01684"/>
    </source>
</evidence>
<reference key="1">
    <citation type="journal article" date="2011" name="Proc. Natl. Acad. Sci. U.S.A.">
        <title>Genomic anatomy of Escherichia coli O157:H7 outbreaks.</title>
        <authorList>
            <person name="Eppinger M."/>
            <person name="Mammel M.K."/>
            <person name="Leclerc J.E."/>
            <person name="Ravel J."/>
            <person name="Cebula T.A."/>
        </authorList>
    </citation>
    <scope>NUCLEOTIDE SEQUENCE [LARGE SCALE GENOMIC DNA]</scope>
    <source>
        <strain>EC4115 / EHEC</strain>
    </source>
</reference>
<accession>B5Z0D9</accession>
<comment type="function">
    <text evidence="1">Catalyzes the irreversible cleavage of the glycosidic bond in both 5'-methylthioadenosine (MTA) and S-adenosylhomocysteine (SAH/AdoHcy) to adenine and the corresponding thioribose, 5'-methylthioribose and S-ribosylhomocysteine, respectively. Also cleaves 5'-deoxyadenosine, a toxic by-product of radical S-adenosylmethionine (SAM) enzymes, into 5-deoxyribose and adenine. Thus, is required for in vivo function of the radical SAM enzymes biotin synthase and lipoic acid synthase, that are inhibited by 5'-deoxyadenosine accumulation.</text>
</comment>
<comment type="catalytic activity">
    <reaction evidence="1">
        <text>S-adenosyl-L-homocysteine + H2O = S-(5-deoxy-D-ribos-5-yl)-L-homocysteine + adenine</text>
        <dbReference type="Rhea" id="RHEA:17805"/>
        <dbReference type="ChEBI" id="CHEBI:15377"/>
        <dbReference type="ChEBI" id="CHEBI:16708"/>
        <dbReference type="ChEBI" id="CHEBI:57856"/>
        <dbReference type="ChEBI" id="CHEBI:58195"/>
        <dbReference type="EC" id="3.2.2.9"/>
    </reaction>
</comment>
<comment type="catalytic activity">
    <reaction evidence="1">
        <text>S-methyl-5'-thioadenosine + H2O = 5-(methylsulfanyl)-D-ribose + adenine</text>
        <dbReference type="Rhea" id="RHEA:13617"/>
        <dbReference type="ChEBI" id="CHEBI:15377"/>
        <dbReference type="ChEBI" id="CHEBI:16708"/>
        <dbReference type="ChEBI" id="CHEBI:17509"/>
        <dbReference type="ChEBI" id="CHEBI:78440"/>
        <dbReference type="EC" id="3.2.2.9"/>
    </reaction>
</comment>
<comment type="catalytic activity">
    <reaction evidence="1">
        <text>5'-deoxyadenosine + H2O = 5-deoxy-D-ribose + adenine</text>
        <dbReference type="Rhea" id="RHEA:29859"/>
        <dbReference type="ChEBI" id="CHEBI:15377"/>
        <dbReference type="ChEBI" id="CHEBI:16708"/>
        <dbReference type="ChEBI" id="CHEBI:17319"/>
        <dbReference type="ChEBI" id="CHEBI:149540"/>
        <dbReference type="EC" id="3.2.2.9"/>
    </reaction>
    <physiologicalReaction direction="left-to-right" evidence="1">
        <dbReference type="Rhea" id="RHEA:29860"/>
    </physiologicalReaction>
</comment>
<comment type="pathway">
    <text evidence="1">Amino-acid biosynthesis; L-methionine biosynthesis via salvage pathway; S-methyl-5-thio-alpha-D-ribose 1-phosphate from S-methyl-5'-thioadenosine (hydrolase route): step 1/2.</text>
</comment>
<comment type="subunit">
    <text evidence="1">Homodimer.</text>
</comment>
<comment type="similarity">
    <text evidence="1">Belongs to the PNP/UDP phosphorylase family. MtnN subfamily.</text>
</comment>
<proteinExistence type="inferred from homology"/>
<dbReference type="EC" id="3.2.2.9" evidence="1"/>
<dbReference type="EMBL" id="CP001164">
    <property type="protein sequence ID" value="ACI35845.1"/>
    <property type="molecule type" value="Genomic_DNA"/>
</dbReference>
<dbReference type="RefSeq" id="WP_000689844.1">
    <property type="nucleotide sequence ID" value="NC_011353.1"/>
</dbReference>
<dbReference type="SMR" id="B5Z0D9"/>
<dbReference type="GeneID" id="93777267"/>
<dbReference type="KEGG" id="ecf:ECH74115_0169"/>
<dbReference type="HOGENOM" id="CLU_031248_2_2_6"/>
<dbReference type="UniPathway" id="UPA00904">
    <property type="reaction ID" value="UER00871"/>
</dbReference>
<dbReference type="GO" id="GO:0005829">
    <property type="term" value="C:cytosol"/>
    <property type="evidence" value="ECO:0007669"/>
    <property type="project" value="TreeGrafter"/>
</dbReference>
<dbReference type="GO" id="GO:0008782">
    <property type="term" value="F:adenosylhomocysteine nucleosidase activity"/>
    <property type="evidence" value="ECO:0007669"/>
    <property type="project" value="UniProtKB-UniRule"/>
</dbReference>
<dbReference type="GO" id="GO:0008930">
    <property type="term" value="F:methylthioadenosine nucleosidase activity"/>
    <property type="evidence" value="ECO:0007669"/>
    <property type="project" value="UniProtKB-UniRule"/>
</dbReference>
<dbReference type="GO" id="GO:0019509">
    <property type="term" value="P:L-methionine salvage from methylthioadenosine"/>
    <property type="evidence" value="ECO:0007669"/>
    <property type="project" value="UniProtKB-UniRule"/>
</dbReference>
<dbReference type="GO" id="GO:0019284">
    <property type="term" value="P:L-methionine salvage from S-adenosylmethionine"/>
    <property type="evidence" value="ECO:0007669"/>
    <property type="project" value="TreeGrafter"/>
</dbReference>
<dbReference type="GO" id="GO:0046124">
    <property type="term" value="P:purine deoxyribonucleoside catabolic process"/>
    <property type="evidence" value="ECO:0007669"/>
    <property type="project" value="UniProtKB-UniRule"/>
</dbReference>
<dbReference type="CDD" id="cd09008">
    <property type="entry name" value="MTAN"/>
    <property type="match status" value="1"/>
</dbReference>
<dbReference type="FunFam" id="3.40.50.1580:FF:000001">
    <property type="entry name" value="MTA/SAH nucleosidase family protein"/>
    <property type="match status" value="1"/>
</dbReference>
<dbReference type="Gene3D" id="3.40.50.1580">
    <property type="entry name" value="Nucleoside phosphorylase domain"/>
    <property type="match status" value="1"/>
</dbReference>
<dbReference type="HAMAP" id="MF_01684">
    <property type="entry name" value="Salvage_MtnN"/>
    <property type="match status" value="1"/>
</dbReference>
<dbReference type="InterPro" id="IPR010049">
    <property type="entry name" value="MTA_SAH_Nsdase"/>
</dbReference>
<dbReference type="InterPro" id="IPR000845">
    <property type="entry name" value="Nucleoside_phosphorylase_d"/>
</dbReference>
<dbReference type="InterPro" id="IPR035994">
    <property type="entry name" value="Nucleoside_phosphorylase_sf"/>
</dbReference>
<dbReference type="NCBIfam" id="TIGR01704">
    <property type="entry name" value="MTA_SAH-Nsdase"/>
    <property type="match status" value="1"/>
</dbReference>
<dbReference type="NCBIfam" id="NF004079">
    <property type="entry name" value="PRK05584.1"/>
    <property type="match status" value="1"/>
</dbReference>
<dbReference type="PANTHER" id="PTHR46832">
    <property type="entry name" value="5'-METHYLTHIOADENOSINE/S-ADENOSYLHOMOCYSTEINE NUCLEOSIDASE"/>
    <property type="match status" value="1"/>
</dbReference>
<dbReference type="PANTHER" id="PTHR46832:SF1">
    <property type="entry name" value="5'-METHYLTHIOADENOSINE_S-ADENOSYLHOMOCYSTEINE NUCLEOSIDASE"/>
    <property type="match status" value="1"/>
</dbReference>
<dbReference type="Pfam" id="PF01048">
    <property type="entry name" value="PNP_UDP_1"/>
    <property type="match status" value="1"/>
</dbReference>
<dbReference type="SUPFAM" id="SSF53167">
    <property type="entry name" value="Purine and uridine phosphorylases"/>
    <property type="match status" value="1"/>
</dbReference>
<keyword id="KW-0028">Amino-acid biosynthesis</keyword>
<keyword id="KW-0378">Hydrolase</keyword>
<keyword id="KW-0486">Methionine biosynthesis</keyword>
<organism>
    <name type="scientific">Escherichia coli O157:H7 (strain EC4115 / EHEC)</name>
    <dbReference type="NCBI Taxonomy" id="444450"/>
    <lineage>
        <taxon>Bacteria</taxon>
        <taxon>Pseudomonadati</taxon>
        <taxon>Pseudomonadota</taxon>
        <taxon>Gammaproteobacteria</taxon>
        <taxon>Enterobacterales</taxon>
        <taxon>Enterobacteriaceae</taxon>
        <taxon>Escherichia</taxon>
    </lineage>
</organism>
<feature type="chain" id="PRO_1000187419" description="5'-methylthioadenosine/S-adenosylhomocysteine nucleosidase">
    <location>
        <begin position="1"/>
        <end position="232"/>
    </location>
</feature>
<feature type="active site" description="Proton acceptor" evidence="1">
    <location>
        <position position="12"/>
    </location>
</feature>
<feature type="active site" description="Proton donor" evidence="1">
    <location>
        <position position="197"/>
    </location>
</feature>
<feature type="binding site" evidence="1">
    <location>
        <position position="78"/>
    </location>
    <ligand>
        <name>substrate</name>
    </ligand>
</feature>
<feature type="binding site" evidence="1">
    <location>
        <position position="152"/>
    </location>
    <ligand>
        <name>substrate</name>
    </ligand>
</feature>
<feature type="binding site" evidence="1">
    <location>
        <begin position="173"/>
        <end position="174"/>
    </location>
    <ligand>
        <name>substrate</name>
    </ligand>
</feature>
<protein>
    <recommendedName>
        <fullName evidence="1">5'-methylthioadenosine/S-adenosylhomocysteine nucleosidase</fullName>
        <shortName evidence="1">MTA/SAH nucleosidase</shortName>
        <shortName evidence="1">MTAN</shortName>
        <ecNumber evidence="1">3.2.2.9</ecNumber>
    </recommendedName>
    <alternativeName>
        <fullName evidence="1">5'-deoxyadenosine nucleosidase</fullName>
        <shortName evidence="1">DOA nucleosidase</shortName>
        <shortName evidence="1">dAdo nucleosidase</shortName>
    </alternativeName>
    <alternativeName>
        <fullName evidence="1">5'-methylthioadenosine nucleosidase</fullName>
        <shortName evidence="1">MTA nucleosidase</shortName>
    </alternativeName>
    <alternativeName>
        <fullName evidence="1">S-adenosylhomocysteine nucleosidase</fullName>
        <shortName evidence="1">AdoHcy nucleosidase</shortName>
        <shortName evidence="1">SAH nucleosidase</shortName>
        <shortName evidence="1">SRH nucleosidase</shortName>
    </alternativeName>
</protein>
<name>MTNN_ECO5E</name>